<keyword id="KW-1185">Reference proteome</keyword>
<protein>
    <recommendedName>
        <fullName>Uncharacterized protein 218R</fullName>
    </recommendedName>
</protein>
<organism>
    <name type="scientific">Invertebrate iridescent virus 6</name>
    <name type="common">IIV-6</name>
    <name type="synonym">Chilo iridescent virus</name>
    <dbReference type="NCBI Taxonomy" id="176652"/>
    <lineage>
        <taxon>Viruses</taxon>
        <taxon>Varidnaviria</taxon>
        <taxon>Bamfordvirae</taxon>
        <taxon>Nucleocytoviricota</taxon>
        <taxon>Megaviricetes</taxon>
        <taxon>Pimascovirales</taxon>
        <taxon>Iridoviridae</taxon>
        <taxon>Betairidovirinae</taxon>
        <taxon>Iridovirus</taxon>
    </lineage>
</organism>
<name>218R_IIV6</name>
<accession>Q91FV3</accession>
<feature type="chain" id="PRO_0000378029" description="Uncharacterized protein 218R">
    <location>
        <begin position="1"/>
        <end position="274"/>
    </location>
</feature>
<organismHost>
    <name type="scientific">Acheta domesticus</name>
    <name type="common">House cricket</name>
    <dbReference type="NCBI Taxonomy" id="6997"/>
</organismHost>
<organismHost>
    <name type="scientific">Chilo suppressalis</name>
    <name type="common">Asiatic rice borer moth</name>
    <dbReference type="NCBI Taxonomy" id="168631"/>
</organismHost>
<organismHost>
    <name type="scientific">Gryllus bimaculatus</name>
    <name type="common">Two-spotted cricket</name>
    <dbReference type="NCBI Taxonomy" id="6999"/>
</organismHost>
<organismHost>
    <name type="scientific">Gryllus campestris</name>
    <dbReference type="NCBI Taxonomy" id="58607"/>
</organismHost>
<organismHost>
    <name type="scientific">Spodoptera frugiperda</name>
    <name type="common">Fall armyworm</name>
    <dbReference type="NCBI Taxonomy" id="7108"/>
</organismHost>
<gene>
    <name type="ORF">IIV6-218R</name>
</gene>
<dbReference type="EMBL" id="AF303741">
    <property type="protein sequence ID" value="AAK82080.1"/>
    <property type="molecule type" value="Genomic_DNA"/>
</dbReference>
<dbReference type="RefSeq" id="NP_149681.1">
    <property type="nucleotide sequence ID" value="NC_003038.1"/>
</dbReference>
<dbReference type="SMR" id="Q91FV3"/>
<dbReference type="KEGG" id="vg:1733127"/>
<dbReference type="Proteomes" id="UP000001359">
    <property type="component" value="Genome"/>
</dbReference>
<reference key="1">
    <citation type="journal article" date="2001" name="Virology">
        <title>Analysis of the first complete DNA sequence of an invertebrate iridovirus: coding strategy of the genome of Chilo iridescent virus.</title>
        <authorList>
            <person name="Jakob N.J."/>
            <person name="Mueller K."/>
            <person name="Bahr U."/>
            <person name="Darai G."/>
        </authorList>
    </citation>
    <scope>NUCLEOTIDE SEQUENCE [LARGE SCALE GENOMIC DNA]</scope>
</reference>
<reference key="2">
    <citation type="journal article" date="2007" name="Virol. J.">
        <title>Comparative genomic analysis of the family Iridoviridae: re-annotating and defining the core set of iridovirus genes.</title>
        <authorList>
            <person name="Eaton H.E."/>
            <person name="Metcalf J."/>
            <person name="Penny E."/>
            <person name="Tcherepanov V."/>
            <person name="Upton C."/>
            <person name="Brunetti C.R."/>
        </authorList>
    </citation>
    <scope>GENOME REANNOTATION</scope>
</reference>
<sequence length="274" mass="31283">MAKYQHYAIFEAVKEFVTSLCDCYQDEVDEPLHMLKAYLNKLNISMKESTKIINETIDFCKRNSKAIDKKDVSLFESGDKGIIFDEEAFIDVIEYLQKEDENQSVILDHLNSINYLIDGGVTEEELFLNKFVTSFASSFNSSSVNIPEFSEEGVSDESIEAIGNVIKPTIEKSLEDFQTKNLNVDRFMKSISFKVKEYIEKNDIPGIHKNELHDILDMTIENDVSELFEKKFEIFAKLSSSGLLAHLPLDKIMTLVPSNMEDSVQSELNNLSLE</sequence>
<proteinExistence type="predicted"/>